<feature type="chain" id="PRO_0000315599" description="Probable tetraspanin tspD">
    <location>
        <begin position="1"/>
        <end position="230"/>
    </location>
</feature>
<feature type="topological domain" description="Cytoplasmic" evidence="1">
    <location>
        <begin position="1"/>
        <end position="20"/>
    </location>
</feature>
<feature type="transmembrane region" description="Helical" evidence="1">
    <location>
        <begin position="21"/>
        <end position="41"/>
    </location>
</feature>
<feature type="topological domain" description="Extracellular" evidence="1">
    <location>
        <begin position="42"/>
        <end position="65"/>
    </location>
</feature>
<feature type="transmembrane region" description="Helical" evidence="1">
    <location>
        <begin position="66"/>
        <end position="86"/>
    </location>
</feature>
<feature type="topological domain" description="Cytoplasmic" evidence="1">
    <location>
        <begin position="87"/>
        <end position="90"/>
    </location>
</feature>
<feature type="transmembrane region" description="Helical" evidence="1">
    <location>
        <begin position="91"/>
        <end position="111"/>
    </location>
</feature>
<feature type="topological domain" description="Extracellular" evidence="1">
    <location>
        <begin position="112"/>
        <end position="200"/>
    </location>
</feature>
<feature type="transmembrane region" description="Helical" evidence="1">
    <location>
        <begin position="201"/>
        <end position="221"/>
    </location>
</feature>
<feature type="topological domain" description="Cytoplasmic" evidence="1">
    <location>
        <begin position="222"/>
        <end position="230"/>
    </location>
</feature>
<feature type="glycosylation site" description="N-linked (GlcNAc...) asparagine" evidence="1">
    <location>
        <position position="133"/>
    </location>
</feature>
<feature type="glycosylation site" description="N-linked (GlcNAc...) asparagine" evidence="1">
    <location>
        <position position="138"/>
    </location>
</feature>
<feature type="glycosylation site" description="N-linked (GlcNAc...) asparagine" evidence="1">
    <location>
        <position position="163"/>
    </location>
</feature>
<feature type="glycosylation site" description="N-linked (GlcNAc...) asparagine" evidence="1">
    <location>
        <position position="179"/>
    </location>
</feature>
<proteinExistence type="inferred from homology"/>
<organism>
    <name type="scientific">Dictyostelium discoideum</name>
    <name type="common">Social amoeba</name>
    <dbReference type="NCBI Taxonomy" id="44689"/>
    <lineage>
        <taxon>Eukaryota</taxon>
        <taxon>Amoebozoa</taxon>
        <taxon>Evosea</taxon>
        <taxon>Eumycetozoa</taxon>
        <taxon>Dictyostelia</taxon>
        <taxon>Dictyosteliales</taxon>
        <taxon>Dictyosteliaceae</taxon>
        <taxon>Dictyostelium</taxon>
    </lineage>
</organism>
<accession>Q55CV4</accession>
<sequence length="230" mass="25397">MVEYLPSTPRYLKVPLIILNVILWLLGLVLVIIGGICVGFFSRFKELQEVGGVSESIKSISVSLPAGVLSIGIFFMVLTVAGCIVAYKEKMVGLVFYTILMLVLLVVLIGIGGEALTYHNADIGIEIEDNWKNISYSNQSVVIKKLEQFFECCCFDESDLKLNCTALCPQDDQKNILYNGTFCYDVIFGAVNSKLYLVGSAGVAIGVIELVSLMFALFLIVRLYKSNSYR</sequence>
<reference key="1">
    <citation type="journal article" date="2005" name="Nature">
        <title>The genome of the social amoeba Dictyostelium discoideum.</title>
        <authorList>
            <person name="Eichinger L."/>
            <person name="Pachebat J.A."/>
            <person name="Gloeckner G."/>
            <person name="Rajandream M.A."/>
            <person name="Sucgang R."/>
            <person name="Berriman M."/>
            <person name="Song J."/>
            <person name="Olsen R."/>
            <person name="Szafranski K."/>
            <person name="Xu Q."/>
            <person name="Tunggal B."/>
            <person name="Kummerfeld S."/>
            <person name="Madera M."/>
            <person name="Konfortov B.A."/>
            <person name="Rivero F."/>
            <person name="Bankier A.T."/>
            <person name="Lehmann R."/>
            <person name="Hamlin N."/>
            <person name="Davies R."/>
            <person name="Gaudet P."/>
            <person name="Fey P."/>
            <person name="Pilcher K."/>
            <person name="Chen G."/>
            <person name="Saunders D."/>
            <person name="Sodergren E.J."/>
            <person name="Davis P."/>
            <person name="Kerhornou A."/>
            <person name="Nie X."/>
            <person name="Hall N."/>
            <person name="Anjard C."/>
            <person name="Hemphill L."/>
            <person name="Bason N."/>
            <person name="Farbrother P."/>
            <person name="Desany B."/>
            <person name="Just E."/>
            <person name="Morio T."/>
            <person name="Rost R."/>
            <person name="Churcher C.M."/>
            <person name="Cooper J."/>
            <person name="Haydock S."/>
            <person name="van Driessche N."/>
            <person name="Cronin A."/>
            <person name="Goodhead I."/>
            <person name="Muzny D.M."/>
            <person name="Mourier T."/>
            <person name="Pain A."/>
            <person name="Lu M."/>
            <person name="Harper D."/>
            <person name="Lindsay R."/>
            <person name="Hauser H."/>
            <person name="James K.D."/>
            <person name="Quiles M."/>
            <person name="Madan Babu M."/>
            <person name="Saito T."/>
            <person name="Buchrieser C."/>
            <person name="Wardroper A."/>
            <person name="Felder M."/>
            <person name="Thangavelu M."/>
            <person name="Johnson D."/>
            <person name="Knights A."/>
            <person name="Loulseged H."/>
            <person name="Mungall K.L."/>
            <person name="Oliver K."/>
            <person name="Price C."/>
            <person name="Quail M.A."/>
            <person name="Urushihara H."/>
            <person name="Hernandez J."/>
            <person name="Rabbinowitsch E."/>
            <person name="Steffen D."/>
            <person name="Sanders M."/>
            <person name="Ma J."/>
            <person name="Kohara Y."/>
            <person name="Sharp S."/>
            <person name="Simmonds M.N."/>
            <person name="Spiegler S."/>
            <person name="Tivey A."/>
            <person name="Sugano S."/>
            <person name="White B."/>
            <person name="Walker D."/>
            <person name="Woodward J.R."/>
            <person name="Winckler T."/>
            <person name="Tanaka Y."/>
            <person name="Shaulsky G."/>
            <person name="Schleicher M."/>
            <person name="Weinstock G.M."/>
            <person name="Rosenthal A."/>
            <person name="Cox E.C."/>
            <person name="Chisholm R.L."/>
            <person name="Gibbs R.A."/>
            <person name="Loomis W.F."/>
            <person name="Platzer M."/>
            <person name="Kay R.R."/>
            <person name="Williams J.G."/>
            <person name="Dear P.H."/>
            <person name="Noegel A.A."/>
            <person name="Barrell B.G."/>
            <person name="Kuspa A."/>
        </authorList>
    </citation>
    <scope>NUCLEOTIDE SEQUENCE [LARGE SCALE GENOMIC DNA]</scope>
    <source>
        <strain>AX4</strain>
    </source>
</reference>
<name>TSPD_DICDI</name>
<evidence type="ECO:0000255" key="1"/>
<evidence type="ECO:0000305" key="2"/>
<keyword id="KW-0325">Glycoprotein</keyword>
<keyword id="KW-0472">Membrane</keyword>
<keyword id="KW-1185">Reference proteome</keyword>
<keyword id="KW-0812">Transmembrane</keyword>
<keyword id="KW-1133">Transmembrane helix</keyword>
<dbReference type="EMBL" id="AAFI02000005">
    <property type="protein sequence ID" value="EAL72691.1"/>
    <property type="molecule type" value="Genomic_DNA"/>
</dbReference>
<dbReference type="RefSeq" id="XP_646377.1">
    <property type="nucleotide sequence ID" value="XM_641285.1"/>
</dbReference>
<dbReference type="SMR" id="Q55CV4"/>
<dbReference type="FunCoup" id="Q55CV4">
    <property type="interactions" value="5"/>
</dbReference>
<dbReference type="STRING" id="44689.Q55CV4"/>
<dbReference type="GlyCosmos" id="Q55CV4">
    <property type="glycosylation" value="4 sites, No reported glycans"/>
</dbReference>
<dbReference type="GlyGen" id="Q55CV4">
    <property type="glycosylation" value="4 sites"/>
</dbReference>
<dbReference type="PaxDb" id="44689-DDB0252566"/>
<dbReference type="EnsemblProtists" id="EAL72691">
    <property type="protein sequence ID" value="EAL72691"/>
    <property type="gene ID" value="DDB_G0270682"/>
</dbReference>
<dbReference type="GeneID" id="8617332"/>
<dbReference type="KEGG" id="ddi:DDB_G0270682"/>
<dbReference type="dictyBase" id="DDB_G0270682">
    <property type="gene designation" value="tspD"/>
</dbReference>
<dbReference type="VEuPathDB" id="AmoebaDB:DDB_G0270682"/>
<dbReference type="HOGENOM" id="CLU_1182012_0_0_1"/>
<dbReference type="InParanoid" id="Q55CV4"/>
<dbReference type="OMA" id="CCMMRSI"/>
<dbReference type="PhylomeDB" id="Q55CV4"/>
<dbReference type="PRO" id="PR:Q55CV4"/>
<dbReference type="Proteomes" id="UP000002195">
    <property type="component" value="Chromosome 1"/>
</dbReference>
<dbReference type="GO" id="GO:0016020">
    <property type="term" value="C:membrane"/>
    <property type="evidence" value="ECO:0007669"/>
    <property type="project" value="UniProtKB-SubCell"/>
</dbReference>
<dbReference type="InterPro" id="IPR018499">
    <property type="entry name" value="Tetraspanin/Peripherin"/>
</dbReference>
<dbReference type="Pfam" id="PF00335">
    <property type="entry name" value="Tetraspanin"/>
    <property type="match status" value="1"/>
</dbReference>
<dbReference type="PRINTS" id="PR00259">
    <property type="entry name" value="TMFOUR"/>
</dbReference>
<gene>
    <name type="primary">tspD</name>
    <name type="ORF">DDB_G0270682</name>
</gene>
<protein>
    <recommendedName>
        <fullName>Probable tetraspanin tspD</fullName>
    </recommendedName>
</protein>
<comment type="subcellular location">
    <subcellularLocation>
        <location evidence="2">Membrane</location>
        <topology evidence="2">Multi-pass membrane protein</topology>
    </subcellularLocation>
</comment>
<comment type="similarity">
    <text evidence="2">Belongs to the tetraspanin (TM4SF) family.</text>
</comment>